<reference key="1">
    <citation type="journal article" date="2003" name="Proc. Natl. Acad. Sci. U.S.A.">
        <title>Complete genome sequence of Lactobacillus plantarum WCFS1.</title>
        <authorList>
            <person name="Kleerebezem M."/>
            <person name="Boekhorst J."/>
            <person name="van Kranenburg R."/>
            <person name="Molenaar D."/>
            <person name="Kuipers O.P."/>
            <person name="Leer R."/>
            <person name="Tarchini R."/>
            <person name="Peters S.A."/>
            <person name="Sandbrink H.M."/>
            <person name="Fiers M.W.E.J."/>
            <person name="Stiekema W."/>
            <person name="Klein Lankhorst R.M."/>
            <person name="Bron P.A."/>
            <person name="Hoffer S.M."/>
            <person name="Nierop Groot M.N."/>
            <person name="Kerkhoven R."/>
            <person name="De Vries M."/>
            <person name="Ursing B."/>
            <person name="De Vos W.M."/>
            <person name="Siezen R.J."/>
        </authorList>
    </citation>
    <scope>NUCLEOTIDE SEQUENCE [LARGE SCALE GENOMIC DNA]</scope>
    <source>
        <strain>ATCC BAA-793 / NCIMB 8826 / WCFS1</strain>
    </source>
</reference>
<reference key="2">
    <citation type="journal article" date="2012" name="J. Bacteriol.">
        <title>Complete resequencing and reannotation of the Lactobacillus plantarum WCFS1 genome.</title>
        <authorList>
            <person name="Siezen R.J."/>
            <person name="Francke C."/>
            <person name="Renckens B."/>
            <person name="Boekhorst J."/>
            <person name="Wels M."/>
            <person name="Kleerebezem M."/>
            <person name="van Hijum S.A."/>
        </authorList>
    </citation>
    <scope>NUCLEOTIDE SEQUENCE [LARGE SCALE GENOMIC DNA]</scope>
    <scope>GENOME REANNOTATION</scope>
    <source>
        <strain>ATCC BAA-793 / NCIMB 8826 / WCFS1</strain>
    </source>
</reference>
<gene>
    <name evidence="1" type="primary">murA2</name>
    <name type="ordered locus">lp_0510</name>
</gene>
<proteinExistence type="inferred from homology"/>
<evidence type="ECO:0000255" key="1">
    <source>
        <dbReference type="HAMAP-Rule" id="MF_00111"/>
    </source>
</evidence>
<dbReference type="EC" id="2.5.1.7" evidence="1"/>
<dbReference type="EMBL" id="AL935263">
    <property type="protein sequence ID" value="CCC78002.1"/>
    <property type="molecule type" value="Genomic_DNA"/>
</dbReference>
<dbReference type="RefSeq" id="WP_003642050.1">
    <property type="nucleotide sequence ID" value="NC_004567.2"/>
</dbReference>
<dbReference type="RefSeq" id="YP_004888516.1">
    <property type="nucleotide sequence ID" value="NC_004567.2"/>
</dbReference>
<dbReference type="SMR" id="Q88Z54"/>
<dbReference type="STRING" id="220668.lp_0510"/>
<dbReference type="EnsemblBacteria" id="CCC78002">
    <property type="protein sequence ID" value="CCC78002"/>
    <property type="gene ID" value="lp_0510"/>
</dbReference>
<dbReference type="KEGG" id="lpl:lp_0510"/>
<dbReference type="PATRIC" id="fig|220668.9.peg.419"/>
<dbReference type="eggNOG" id="COG0766">
    <property type="taxonomic scope" value="Bacteria"/>
</dbReference>
<dbReference type="HOGENOM" id="CLU_027387_0_0_9"/>
<dbReference type="OrthoDB" id="9803760at2"/>
<dbReference type="PhylomeDB" id="Q88Z54"/>
<dbReference type="UniPathway" id="UPA00219"/>
<dbReference type="Proteomes" id="UP000000432">
    <property type="component" value="Chromosome"/>
</dbReference>
<dbReference type="GO" id="GO:0005737">
    <property type="term" value="C:cytoplasm"/>
    <property type="evidence" value="ECO:0007669"/>
    <property type="project" value="UniProtKB-SubCell"/>
</dbReference>
<dbReference type="GO" id="GO:0008760">
    <property type="term" value="F:UDP-N-acetylglucosamine 1-carboxyvinyltransferase activity"/>
    <property type="evidence" value="ECO:0007669"/>
    <property type="project" value="UniProtKB-UniRule"/>
</dbReference>
<dbReference type="GO" id="GO:0051301">
    <property type="term" value="P:cell division"/>
    <property type="evidence" value="ECO:0007669"/>
    <property type="project" value="UniProtKB-KW"/>
</dbReference>
<dbReference type="GO" id="GO:0071555">
    <property type="term" value="P:cell wall organization"/>
    <property type="evidence" value="ECO:0007669"/>
    <property type="project" value="UniProtKB-KW"/>
</dbReference>
<dbReference type="GO" id="GO:0009252">
    <property type="term" value="P:peptidoglycan biosynthetic process"/>
    <property type="evidence" value="ECO:0007669"/>
    <property type="project" value="UniProtKB-UniRule"/>
</dbReference>
<dbReference type="GO" id="GO:0008360">
    <property type="term" value="P:regulation of cell shape"/>
    <property type="evidence" value="ECO:0007669"/>
    <property type="project" value="UniProtKB-KW"/>
</dbReference>
<dbReference type="GO" id="GO:0019277">
    <property type="term" value="P:UDP-N-acetylgalactosamine biosynthetic process"/>
    <property type="evidence" value="ECO:0007669"/>
    <property type="project" value="InterPro"/>
</dbReference>
<dbReference type="CDD" id="cd01555">
    <property type="entry name" value="UdpNAET"/>
    <property type="match status" value="1"/>
</dbReference>
<dbReference type="Gene3D" id="3.65.10.10">
    <property type="entry name" value="Enolpyruvate transferase domain"/>
    <property type="match status" value="2"/>
</dbReference>
<dbReference type="HAMAP" id="MF_00111">
    <property type="entry name" value="MurA"/>
    <property type="match status" value="1"/>
</dbReference>
<dbReference type="InterPro" id="IPR001986">
    <property type="entry name" value="Enolpyruvate_Tfrase_dom"/>
</dbReference>
<dbReference type="InterPro" id="IPR036968">
    <property type="entry name" value="Enolpyruvate_Tfrase_sf"/>
</dbReference>
<dbReference type="InterPro" id="IPR050068">
    <property type="entry name" value="MurA_subfamily"/>
</dbReference>
<dbReference type="InterPro" id="IPR013792">
    <property type="entry name" value="RNA3'P_cycl/enolpyr_Trfase_a/b"/>
</dbReference>
<dbReference type="InterPro" id="IPR005750">
    <property type="entry name" value="UDP_GlcNAc_COvinyl_MurA"/>
</dbReference>
<dbReference type="NCBIfam" id="TIGR01072">
    <property type="entry name" value="murA"/>
    <property type="match status" value="1"/>
</dbReference>
<dbReference type="NCBIfam" id="NF006873">
    <property type="entry name" value="PRK09369.1"/>
    <property type="match status" value="1"/>
</dbReference>
<dbReference type="NCBIfam" id="NF009470">
    <property type="entry name" value="PRK12830.1"/>
    <property type="match status" value="1"/>
</dbReference>
<dbReference type="PANTHER" id="PTHR43783">
    <property type="entry name" value="UDP-N-ACETYLGLUCOSAMINE 1-CARBOXYVINYLTRANSFERASE"/>
    <property type="match status" value="1"/>
</dbReference>
<dbReference type="PANTHER" id="PTHR43783:SF2">
    <property type="entry name" value="UDP-N-ACETYLGLUCOSAMINE 1-CARBOXYVINYLTRANSFERASE 2"/>
    <property type="match status" value="1"/>
</dbReference>
<dbReference type="Pfam" id="PF00275">
    <property type="entry name" value="EPSP_synthase"/>
    <property type="match status" value="1"/>
</dbReference>
<dbReference type="SUPFAM" id="SSF55205">
    <property type="entry name" value="EPT/RTPC-like"/>
    <property type="match status" value="1"/>
</dbReference>
<comment type="function">
    <text evidence="1">Cell wall formation. Adds enolpyruvyl to UDP-N-acetylglucosamine.</text>
</comment>
<comment type="catalytic activity">
    <reaction evidence="1">
        <text>phosphoenolpyruvate + UDP-N-acetyl-alpha-D-glucosamine = UDP-N-acetyl-3-O-(1-carboxyvinyl)-alpha-D-glucosamine + phosphate</text>
        <dbReference type="Rhea" id="RHEA:18681"/>
        <dbReference type="ChEBI" id="CHEBI:43474"/>
        <dbReference type="ChEBI" id="CHEBI:57705"/>
        <dbReference type="ChEBI" id="CHEBI:58702"/>
        <dbReference type="ChEBI" id="CHEBI:68483"/>
        <dbReference type="EC" id="2.5.1.7"/>
    </reaction>
</comment>
<comment type="pathway">
    <text evidence="1">Cell wall biogenesis; peptidoglycan biosynthesis.</text>
</comment>
<comment type="subcellular location">
    <subcellularLocation>
        <location evidence="1">Cytoplasm</location>
    </subcellularLocation>
</comment>
<comment type="similarity">
    <text evidence="1">Belongs to the EPSP synthase family. MurA subfamily.</text>
</comment>
<keyword id="KW-0131">Cell cycle</keyword>
<keyword id="KW-0132">Cell division</keyword>
<keyword id="KW-0133">Cell shape</keyword>
<keyword id="KW-0961">Cell wall biogenesis/degradation</keyword>
<keyword id="KW-0963">Cytoplasm</keyword>
<keyword id="KW-0573">Peptidoglycan synthesis</keyword>
<keyword id="KW-1185">Reference proteome</keyword>
<keyword id="KW-0808">Transferase</keyword>
<name>MURA2_LACPL</name>
<protein>
    <recommendedName>
        <fullName evidence="1">UDP-N-acetylglucosamine 1-carboxyvinyltransferase 2</fullName>
        <ecNumber evidence="1">2.5.1.7</ecNumber>
    </recommendedName>
    <alternativeName>
        <fullName evidence="1">Enoylpyruvate transferase 2</fullName>
    </alternativeName>
    <alternativeName>
        <fullName evidence="1">UDP-N-acetylglucosamine enolpyruvyl transferase 2</fullName>
        <shortName evidence="1">EPT 2</shortName>
    </alternativeName>
</protein>
<accession>Q88Z54</accession>
<accession>F9UKY7</accession>
<sequence>MKKMIIHGGKRLSGELTIGGAKNSTVALIPAAILADTPVQFDTVPHILDVHNLRLILESMNVHSTFENDVLTIDPTNIEESELPSHAIKSLRASYYFMGALLGRFNRATVTFPGGDNIGPRPIDQHIKGFKALGANVVEENDSVFISTGTEGLHGARIFLDVVSVGATINIILAAVKAHGTTTIENAAKEPEIIDLATFLNNMGAKIRGAGTDVIRIEGVPALHSRATHTIIPDRIETGTYLSLAASIGDGILLKNVIPEHMESFTAKLVEMGVDLQINEDSIYVPRSNDLDPIRVKTMTYPGFATDLQQPITPLLLRANGSSVVIDTIYPQRTQHVEQLRKMGADIRVQDNLIVVGHSSHLQGAHVEAGEIRSGAALMIAGLAASGVTEISRADNILRGYDRVIDKLHTLGADVEIAADEEVPEN</sequence>
<organism>
    <name type="scientific">Lactiplantibacillus plantarum (strain ATCC BAA-793 / NCIMB 8826 / WCFS1)</name>
    <name type="common">Lactobacillus plantarum</name>
    <dbReference type="NCBI Taxonomy" id="220668"/>
    <lineage>
        <taxon>Bacteria</taxon>
        <taxon>Bacillati</taxon>
        <taxon>Bacillota</taxon>
        <taxon>Bacilli</taxon>
        <taxon>Lactobacillales</taxon>
        <taxon>Lactobacillaceae</taxon>
        <taxon>Lactiplantibacillus</taxon>
    </lineage>
</organism>
<feature type="chain" id="PRO_0000178882" description="UDP-N-acetylglucosamine 1-carboxyvinyltransferase 2">
    <location>
        <begin position="1"/>
        <end position="426"/>
    </location>
</feature>
<feature type="active site" description="Proton donor" evidence="1">
    <location>
        <position position="116"/>
    </location>
</feature>
<feature type="binding site" evidence="1">
    <location>
        <begin position="22"/>
        <end position="23"/>
    </location>
    <ligand>
        <name>phosphoenolpyruvate</name>
        <dbReference type="ChEBI" id="CHEBI:58702"/>
    </ligand>
</feature>
<feature type="binding site" evidence="1">
    <location>
        <position position="92"/>
    </location>
    <ligand>
        <name>UDP-N-acetyl-alpha-D-glucosamine</name>
        <dbReference type="ChEBI" id="CHEBI:57705"/>
    </ligand>
</feature>
<feature type="binding site" evidence="1">
    <location>
        <begin position="121"/>
        <end position="125"/>
    </location>
    <ligand>
        <name>UDP-N-acetyl-alpha-D-glucosamine</name>
        <dbReference type="ChEBI" id="CHEBI:57705"/>
    </ligand>
</feature>
<feature type="binding site" evidence="1">
    <location>
        <position position="307"/>
    </location>
    <ligand>
        <name>UDP-N-acetyl-alpha-D-glucosamine</name>
        <dbReference type="ChEBI" id="CHEBI:57705"/>
    </ligand>
</feature>
<feature type="binding site" evidence="1">
    <location>
        <position position="329"/>
    </location>
    <ligand>
        <name>UDP-N-acetyl-alpha-D-glucosamine</name>
        <dbReference type="ChEBI" id="CHEBI:57705"/>
    </ligand>
</feature>